<gene>
    <name evidence="1" type="primary">mqo</name>
    <name type="ordered locus">CMS0162</name>
</gene>
<feature type="chain" id="PRO_1000078031" description="Probable malate:quinone oxidoreductase">
    <location>
        <begin position="1"/>
        <end position="492"/>
    </location>
</feature>
<evidence type="ECO:0000255" key="1">
    <source>
        <dbReference type="HAMAP-Rule" id="MF_00212"/>
    </source>
</evidence>
<dbReference type="EC" id="1.1.5.4" evidence="1"/>
<dbReference type="EMBL" id="AM849034">
    <property type="protein sequence ID" value="CAQ00286.1"/>
    <property type="molecule type" value="Genomic_DNA"/>
</dbReference>
<dbReference type="SMR" id="B0RIH2"/>
<dbReference type="STRING" id="31964.CMS0162"/>
<dbReference type="KEGG" id="cms:CMS0162"/>
<dbReference type="eggNOG" id="COG0579">
    <property type="taxonomic scope" value="Bacteria"/>
</dbReference>
<dbReference type="HOGENOM" id="CLU_028151_0_0_11"/>
<dbReference type="OrthoDB" id="9763983at2"/>
<dbReference type="UniPathway" id="UPA00223">
    <property type="reaction ID" value="UER01008"/>
</dbReference>
<dbReference type="Proteomes" id="UP000001318">
    <property type="component" value="Chromosome"/>
</dbReference>
<dbReference type="GO" id="GO:0047545">
    <property type="term" value="F:2-hydroxyglutarate dehydrogenase activity"/>
    <property type="evidence" value="ECO:0007669"/>
    <property type="project" value="TreeGrafter"/>
</dbReference>
<dbReference type="GO" id="GO:0008924">
    <property type="term" value="F:L-malate dehydrogenase (quinone) activity"/>
    <property type="evidence" value="ECO:0007669"/>
    <property type="project" value="UniProtKB-UniRule"/>
</dbReference>
<dbReference type="GO" id="GO:0006099">
    <property type="term" value="P:tricarboxylic acid cycle"/>
    <property type="evidence" value="ECO:0007669"/>
    <property type="project" value="UniProtKB-UniRule"/>
</dbReference>
<dbReference type="Gene3D" id="3.30.9.10">
    <property type="entry name" value="D-Amino Acid Oxidase, subunit A, domain 2"/>
    <property type="match status" value="1"/>
</dbReference>
<dbReference type="Gene3D" id="3.50.50.60">
    <property type="entry name" value="FAD/NAD(P)-binding domain"/>
    <property type="match status" value="1"/>
</dbReference>
<dbReference type="HAMAP" id="MF_00212">
    <property type="entry name" value="MQO"/>
    <property type="match status" value="1"/>
</dbReference>
<dbReference type="InterPro" id="IPR036188">
    <property type="entry name" value="FAD/NAD-bd_sf"/>
</dbReference>
<dbReference type="InterPro" id="IPR006231">
    <property type="entry name" value="MQO"/>
</dbReference>
<dbReference type="NCBIfam" id="TIGR01320">
    <property type="entry name" value="mal_quin_oxido"/>
    <property type="match status" value="1"/>
</dbReference>
<dbReference type="NCBIfam" id="NF003603">
    <property type="entry name" value="PRK05257.1-1"/>
    <property type="match status" value="1"/>
</dbReference>
<dbReference type="NCBIfam" id="NF003605">
    <property type="entry name" value="PRK05257.1-4"/>
    <property type="match status" value="1"/>
</dbReference>
<dbReference type="NCBIfam" id="NF003606">
    <property type="entry name" value="PRK05257.2-1"/>
    <property type="match status" value="1"/>
</dbReference>
<dbReference type="NCBIfam" id="NF003610">
    <property type="entry name" value="PRK05257.3-1"/>
    <property type="match status" value="1"/>
</dbReference>
<dbReference type="NCBIfam" id="NF003611">
    <property type="entry name" value="PRK05257.3-2"/>
    <property type="match status" value="1"/>
</dbReference>
<dbReference type="NCBIfam" id="NF009875">
    <property type="entry name" value="PRK13339.1"/>
    <property type="match status" value="1"/>
</dbReference>
<dbReference type="PANTHER" id="PTHR43104">
    <property type="entry name" value="L-2-HYDROXYGLUTARATE DEHYDROGENASE, MITOCHONDRIAL"/>
    <property type="match status" value="1"/>
</dbReference>
<dbReference type="PANTHER" id="PTHR43104:SF2">
    <property type="entry name" value="L-2-HYDROXYGLUTARATE DEHYDROGENASE, MITOCHONDRIAL"/>
    <property type="match status" value="1"/>
</dbReference>
<dbReference type="Pfam" id="PF06039">
    <property type="entry name" value="Mqo"/>
    <property type="match status" value="1"/>
</dbReference>
<dbReference type="SUPFAM" id="SSF51905">
    <property type="entry name" value="FAD/NAD(P)-binding domain"/>
    <property type="match status" value="1"/>
</dbReference>
<protein>
    <recommendedName>
        <fullName evidence="1">Probable malate:quinone oxidoreductase</fullName>
        <ecNumber evidence="1">1.1.5.4</ecNumber>
    </recommendedName>
    <alternativeName>
        <fullName evidence="1">MQO</fullName>
    </alternativeName>
    <alternativeName>
        <fullName evidence="1">Malate dehydrogenase [quinone]</fullName>
    </alternativeName>
</protein>
<proteinExistence type="inferred from homology"/>
<reference key="1">
    <citation type="journal article" date="2008" name="J. Bacteriol.">
        <title>Genome of the actinomycete plant pathogen Clavibacter michiganensis subsp. sepedonicus suggests recent niche adaptation.</title>
        <authorList>
            <person name="Bentley S.D."/>
            <person name="Corton C."/>
            <person name="Brown S.E."/>
            <person name="Barron A."/>
            <person name="Clark L."/>
            <person name="Doggett J."/>
            <person name="Harris B."/>
            <person name="Ormond D."/>
            <person name="Quail M.A."/>
            <person name="May G."/>
            <person name="Francis D."/>
            <person name="Knudson D."/>
            <person name="Parkhill J."/>
            <person name="Ishimaru C.A."/>
        </authorList>
    </citation>
    <scope>NUCLEOTIDE SEQUENCE [LARGE SCALE GENOMIC DNA]</scope>
    <source>
        <strain>ATCC 33113 / DSM 20744 / JCM 9667 / LMG 2889 / ICMP 2535 / C-1</strain>
    </source>
</reference>
<name>MQO_CLASE</name>
<organism>
    <name type="scientific">Clavibacter sepedonicus</name>
    <name type="common">Clavibacter michiganensis subsp. sepedonicus</name>
    <dbReference type="NCBI Taxonomy" id="31964"/>
    <lineage>
        <taxon>Bacteria</taxon>
        <taxon>Bacillati</taxon>
        <taxon>Actinomycetota</taxon>
        <taxon>Actinomycetes</taxon>
        <taxon>Micrococcales</taxon>
        <taxon>Microbacteriaceae</taxon>
        <taxon>Clavibacter</taxon>
    </lineage>
</organism>
<keyword id="KW-0274">FAD</keyword>
<keyword id="KW-0285">Flavoprotein</keyword>
<keyword id="KW-0560">Oxidoreductase</keyword>
<keyword id="KW-0816">Tricarboxylic acid cycle</keyword>
<sequence length="492" mass="53768">MSDTAESVDVVLVGGGIMSATLGTLIKQLEPDWTIQIFERLGEVAMESSNPWNNAGTGHAALCELNYTPEKDGKIEIGSATRINEQFQLSRQFWAHLVTAGAVPEPKEFINPTPHMTFVRGKENAEYLRRRFDALRAHPLFDAMEYTEDPAVIHSWAPLLVLQRDKDEVIAATRFEGGTDVDFGALTNKLVDYLMEHGAALHLNHEVRGLSKNADGTWHLRVRNDVGRSTVEVDAKFVFIGAGGGALPLLQKSGIPEIKGFGGFPISGEWFRTDDPEIVAKHRAKVYGKAAIGSPPMSVPHLDTRVVGGETSLLFGPYAGFSPRFLKKGSLLDLFASIRPHNIIPMLAVAKDNMSLIKYLVSQLLASKETKFDALREFMPTADPKDWYQVTAGQRVQVMKKDAEKGGVLQFGTEVVAAADGSIAGLLGASPGASTAVPIMLDVLERCFPDCIAGWKKPLTRMIPNYGTLVASDPKKTPKIIRETAEVLELQH</sequence>
<accession>B0RIH2</accession>
<comment type="catalytic activity">
    <reaction evidence="1">
        <text>(S)-malate + a quinone = a quinol + oxaloacetate</text>
        <dbReference type="Rhea" id="RHEA:46012"/>
        <dbReference type="ChEBI" id="CHEBI:15589"/>
        <dbReference type="ChEBI" id="CHEBI:16452"/>
        <dbReference type="ChEBI" id="CHEBI:24646"/>
        <dbReference type="ChEBI" id="CHEBI:132124"/>
        <dbReference type="EC" id="1.1.5.4"/>
    </reaction>
</comment>
<comment type="cofactor">
    <cofactor evidence="1">
        <name>FAD</name>
        <dbReference type="ChEBI" id="CHEBI:57692"/>
    </cofactor>
</comment>
<comment type="pathway">
    <text evidence="1">Carbohydrate metabolism; tricarboxylic acid cycle; oxaloacetate from (S)-malate (quinone route): step 1/1.</text>
</comment>
<comment type="similarity">
    <text evidence="1">Belongs to the MQO family.</text>
</comment>